<sequence>MPCVFCAIIAGEAPAIRIYEDGGYLAILDIRPFTRGHTLVLPKRHTVDLTDTPPEALADMVAIGQRIARAARATKLADATHIAINDGRAAFQTVFHVHLHVLPPRNGDKLSVAKGMMLRRDPDREATGRILREALAQQDAAAQD</sequence>
<accession>P9WML1</accession>
<accession>L0T945</accession>
<accession>Q11066</accession>
<evidence type="ECO:0000255" key="1">
    <source>
        <dbReference type="PROSITE-ProRule" id="PRU00464"/>
    </source>
</evidence>
<dbReference type="EMBL" id="AL123456">
    <property type="protein sequence ID" value="CCP44018.1"/>
    <property type="molecule type" value="Genomic_DNA"/>
</dbReference>
<dbReference type="PIR" id="F70753">
    <property type="entry name" value="F70753"/>
</dbReference>
<dbReference type="RefSeq" id="NP_215778.1">
    <property type="nucleotide sequence ID" value="NC_000962.3"/>
</dbReference>
<dbReference type="RefSeq" id="WP_003898798.1">
    <property type="nucleotide sequence ID" value="NZ_NVQJ01000049.1"/>
</dbReference>
<dbReference type="SMR" id="P9WML1"/>
<dbReference type="FunCoup" id="P9WML1">
    <property type="interactions" value="405"/>
</dbReference>
<dbReference type="STRING" id="83332.Rv1262c"/>
<dbReference type="PaxDb" id="83332-Rv1262c"/>
<dbReference type="DNASU" id="887036"/>
<dbReference type="GeneID" id="887036"/>
<dbReference type="KEGG" id="mtu:Rv1262c"/>
<dbReference type="KEGG" id="mtv:RVBD_1262c"/>
<dbReference type="TubercuList" id="Rv1262c"/>
<dbReference type="eggNOG" id="COG0537">
    <property type="taxonomic scope" value="Bacteria"/>
</dbReference>
<dbReference type="InParanoid" id="P9WML1"/>
<dbReference type="OrthoDB" id="9784774at2"/>
<dbReference type="PhylomeDB" id="P9WML1"/>
<dbReference type="Proteomes" id="UP000001584">
    <property type="component" value="Chromosome"/>
</dbReference>
<dbReference type="GO" id="GO:0003824">
    <property type="term" value="F:catalytic activity"/>
    <property type="evidence" value="ECO:0007669"/>
    <property type="project" value="InterPro"/>
</dbReference>
<dbReference type="GO" id="GO:0009117">
    <property type="term" value="P:nucleotide metabolic process"/>
    <property type="evidence" value="ECO:0000318"/>
    <property type="project" value="GO_Central"/>
</dbReference>
<dbReference type="CDD" id="cd01277">
    <property type="entry name" value="HINT_subgroup"/>
    <property type="match status" value="1"/>
</dbReference>
<dbReference type="Gene3D" id="3.30.428.10">
    <property type="entry name" value="HIT-like"/>
    <property type="match status" value="1"/>
</dbReference>
<dbReference type="InterPro" id="IPR039384">
    <property type="entry name" value="HINT"/>
</dbReference>
<dbReference type="InterPro" id="IPR019808">
    <property type="entry name" value="Histidine_triad_CS"/>
</dbReference>
<dbReference type="InterPro" id="IPR001310">
    <property type="entry name" value="Histidine_triad_HIT"/>
</dbReference>
<dbReference type="InterPro" id="IPR011146">
    <property type="entry name" value="HIT-like"/>
</dbReference>
<dbReference type="InterPro" id="IPR036265">
    <property type="entry name" value="HIT-like_sf"/>
</dbReference>
<dbReference type="PANTHER" id="PTHR46648:SF1">
    <property type="entry name" value="ADENOSINE 5'-MONOPHOSPHORAMIDASE HNT1"/>
    <property type="match status" value="1"/>
</dbReference>
<dbReference type="PANTHER" id="PTHR46648">
    <property type="entry name" value="HIT FAMILY PROTEIN 1"/>
    <property type="match status" value="1"/>
</dbReference>
<dbReference type="Pfam" id="PF01230">
    <property type="entry name" value="HIT"/>
    <property type="match status" value="1"/>
</dbReference>
<dbReference type="PRINTS" id="PR00332">
    <property type="entry name" value="HISTRIAD"/>
</dbReference>
<dbReference type="SUPFAM" id="SSF54197">
    <property type="entry name" value="HIT-like"/>
    <property type="match status" value="1"/>
</dbReference>
<dbReference type="PROSITE" id="PS00892">
    <property type="entry name" value="HIT_1"/>
    <property type="match status" value="1"/>
</dbReference>
<dbReference type="PROSITE" id="PS51084">
    <property type="entry name" value="HIT_2"/>
    <property type="match status" value="1"/>
</dbReference>
<organism>
    <name type="scientific">Mycobacterium tuberculosis (strain ATCC 25618 / H37Rv)</name>
    <dbReference type="NCBI Taxonomy" id="83332"/>
    <lineage>
        <taxon>Bacteria</taxon>
        <taxon>Bacillati</taxon>
        <taxon>Actinomycetota</taxon>
        <taxon>Actinomycetes</taxon>
        <taxon>Mycobacteriales</taxon>
        <taxon>Mycobacteriaceae</taxon>
        <taxon>Mycobacterium</taxon>
        <taxon>Mycobacterium tuberculosis complex</taxon>
    </lineage>
</organism>
<gene>
    <name type="ordered locus">Rv1262c</name>
    <name type="ORF">MTCY50.20</name>
</gene>
<protein>
    <recommendedName>
        <fullName>Uncharacterized HIT-like protein Rv1262c</fullName>
    </recommendedName>
</protein>
<proteinExistence type="predicted"/>
<reference key="1">
    <citation type="journal article" date="1998" name="Nature">
        <title>Deciphering the biology of Mycobacterium tuberculosis from the complete genome sequence.</title>
        <authorList>
            <person name="Cole S.T."/>
            <person name="Brosch R."/>
            <person name="Parkhill J."/>
            <person name="Garnier T."/>
            <person name="Churcher C.M."/>
            <person name="Harris D.E."/>
            <person name="Gordon S.V."/>
            <person name="Eiglmeier K."/>
            <person name="Gas S."/>
            <person name="Barry C.E. III"/>
            <person name="Tekaia F."/>
            <person name="Badcock K."/>
            <person name="Basham D."/>
            <person name="Brown D."/>
            <person name="Chillingworth T."/>
            <person name="Connor R."/>
            <person name="Davies R.M."/>
            <person name="Devlin K."/>
            <person name="Feltwell T."/>
            <person name="Gentles S."/>
            <person name="Hamlin N."/>
            <person name="Holroyd S."/>
            <person name="Hornsby T."/>
            <person name="Jagels K."/>
            <person name="Krogh A."/>
            <person name="McLean J."/>
            <person name="Moule S."/>
            <person name="Murphy L.D."/>
            <person name="Oliver S."/>
            <person name="Osborne J."/>
            <person name="Quail M.A."/>
            <person name="Rajandream M.A."/>
            <person name="Rogers J."/>
            <person name="Rutter S."/>
            <person name="Seeger K."/>
            <person name="Skelton S."/>
            <person name="Squares S."/>
            <person name="Squares R."/>
            <person name="Sulston J.E."/>
            <person name="Taylor K."/>
            <person name="Whitehead S."/>
            <person name="Barrell B.G."/>
        </authorList>
    </citation>
    <scope>NUCLEOTIDE SEQUENCE [LARGE SCALE GENOMIC DNA]</scope>
    <source>
        <strain>ATCC 25618 / H37Rv</strain>
    </source>
</reference>
<name>YHI2_MYCTU</name>
<keyword id="KW-1185">Reference proteome</keyword>
<feature type="chain" id="PRO_0000109826" description="Uncharacterized HIT-like protein Rv1262c">
    <location>
        <begin position="1"/>
        <end position="144"/>
    </location>
</feature>
<feature type="domain" description="HIT" evidence="1">
    <location>
        <begin position="4"/>
        <end position="111"/>
    </location>
</feature>
<feature type="short sequence motif" description="Histidine triad motif">
    <location>
        <begin position="96"/>
        <end position="100"/>
    </location>
</feature>